<reference key="1">
    <citation type="journal article" date="2000" name="Nature">
        <title>Sequence and analysis of chromosome 1 of the plant Arabidopsis thaliana.</title>
        <authorList>
            <person name="Theologis A."/>
            <person name="Ecker J.R."/>
            <person name="Palm C.J."/>
            <person name="Federspiel N.A."/>
            <person name="Kaul S."/>
            <person name="White O."/>
            <person name="Alonso J."/>
            <person name="Altafi H."/>
            <person name="Araujo R."/>
            <person name="Bowman C.L."/>
            <person name="Brooks S.Y."/>
            <person name="Buehler E."/>
            <person name="Chan A."/>
            <person name="Chao Q."/>
            <person name="Chen H."/>
            <person name="Cheuk R.F."/>
            <person name="Chin C.W."/>
            <person name="Chung M.K."/>
            <person name="Conn L."/>
            <person name="Conway A.B."/>
            <person name="Conway A.R."/>
            <person name="Creasy T.H."/>
            <person name="Dewar K."/>
            <person name="Dunn P."/>
            <person name="Etgu P."/>
            <person name="Feldblyum T.V."/>
            <person name="Feng J.-D."/>
            <person name="Fong B."/>
            <person name="Fujii C.Y."/>
            <person name="Gill J.E."/>
            <person name="Goldsmith A.D."/>
            <person name="Haas B."/>
            <person name="Hansen N.F."/>
            <person name="Hughes B."/>
            <person name="Huizar L."/>
            <person name="Hunter J.L."/>
            <person name="Jenkins J."/>
            <person name="Johnson-Hopson C."/>
            <person name="Khan S."/>
            <person name="Khaykin E."/>
            <person name="Kim C.J."/>
            <person name="Koo H.L."/>
            <person name="Kremenetskaia I."/>
            <person name="Kurtz D.B."/>
            <person name="Kwan A."/>
            <person name="Lam B."/>
            <person name="Langin-Hooper S."/>
            <person name="Lee A."/>
            <person name="Lee J.M."/>
            <person name="Lenz C.A."/>
            <person name="Li J.H."/>
            <person name="Li Y.-P."/>
            <person name="Lin X."/>
            <person name="Liu S.X."/>
            <person name="Liu Z.A."/>
            <person name="Luros J.S."/>
            <person name="Maiti R."/>
            <person name="Marziali A."/>
            <person name="Militscher J."/>
            <person name="Miranda M."/>
            <person name="Nguyen M."/>
            <person name="Nierman W.C."/>
            <person name="Osborne B.I."/>
            <person name="Pai G."/>
            <person name="Peterson J."/>
            <person name="Pham P.K."/>
            <person name="Rizzo M."/>
            <person name="Rooney T."/>
            <person name="Rowley D."/>
            <person name="Sakano H."/>
            <person name="Salzberg S.L."/>
            <person name="Schwartz J.R."/>
            <person name="Shinn P."/>
            <person name="Southwick A.M."/>
            <person name="Sun H."/>
            <person name="Tallon L.J."/>
            <person name="Tambunga G."/>
            <person name="Toriumi M.J."/>
            <person name="Town C.D."/>
            <person name="Utterback T."/>
            <person name="Van Aken S."/>
            <person name="Vaysberg M."/>
            <person name="Vysotskaia V.S."/>
            <person name="Walker M."/>
            <person name="Wu D."/>
            <person name="Yu G."/>
            <person name="Fraser C.M."/>
            <person name="Venter J.C."/>
            <person name="Davis R.W."/>
        </authorList>
    </citation>
    <scope>NUCLEOTIDE SEQUENCE [LARGE SCALE GENOMIC DNA]</scope>
    <source>
        <strain>cv. Columbia</strain>
    </source>
</reference>
<reference key="2">
    <citation type="journal article" date="2017" name="Plant J.">
        <title>Araport11: a complete reannotation of the Arabidopsis thaliana reference genome.</title>
        <authorList>
            <person name="Cheng C.Y."/>
            <person name="Krishnakumar V."/>
            <person name="Chan A.P."/>
            <person name="Thibaud-Nissen F."/>
            <person name="Schobel S."/>
            <person name="Town C.D."/>
        </authorList>
    </citation>
    <scope>GENOME REANNOTATION</scope>
    <source>
        <strain>cv. Columbia</strain>
    </source>
</reference>
<reference key="3">
    <citation type="journal article" date="2003" name="Science">
        <title>Empirical analysis of transcriptional activity in the Arabidopsis genome.</title>
        <authorList>
            <person name="Yamada K."/>
            <person name="Lim J."/>
            <person name="Dale J.M."/>
            <person name="Chen H."/>
            <person name="Shinn P."/>
            <person name="Palm C.J."/>
            <person name="Southwick A.M."/>
            <person name="Wu H.C."/>
            <person name="Kim C.J."/>
            <person name="Nguyen M."/>
            <person name="Pham P.K."/>
            <person name="Cheuk R.F."/>
            <person name="Karlin-Newmann G."/>
            <person name="Liu S.X."/>
            <person name="Lam B."/>
            <person name="Sakano H."/>
            <person name="Wu T."/>
            <person name="Yu G."/>
            <person name="Miranda M."/>
            <person name="Quach H.L."/>
            <person name="Tripp M."/>
            <person name="Chang C.H."/>
            <person name="Lee J.M."/>
            <person name="Toriumi M.J."/>
            <person name="Chan M.M."/>
            <person name="Tang C.C."/>
            <person name="Onodera C.S."/>
            <person name="Deng J.M."/>
            <person name="Akiyama K."/>
            <person name="Ansari Y."/>
            <person name="Arakawa T."/>
            <person name="Banh J."/>
            <person name="Banno F."/>
            <person name="Bowser L."/>
            <person name="Brooks S.Y."/>
            <person name="Carninci P."/>
            <person name="Chao Q."/>
            <person name="Choy N."/>
            <person name="Enju A."/>
            <person name="Goldsmith A.D."/>
            <person name="Gurjal M."/>
            <person name="Hansen N.F."/>
            <person name="Hayashizaki Y."/>
            <person name="Johnson-Hopson C."/>
            <person name="Hsuan V.W."/>
            <person name="Iida K."/>
            <person name="Karnes M."/>
            <person name="Khan S."/>
            <person name="Koesema E."/>
            <person name="Ishida J."/>
            <person name="Jiang P.X."/>
            <person name="Jones T."/>
            <person name="Kawai J."/>
            <person name="Kamiya A."/>
            <person name="Meyers C."/>
            <person name="Nakajima M."/>
            <person name="Narusaka M."/>
            <person name="Seki M."/>
            <person name="Sakurai T."/>
            <person name="Satou M."/>
            <person name="Tamse R."/>
            <person name="Vaysberg M."/>
            <person name="Wallender E.K."/>
            <person name="Wong C."/>
            <person name="Yamamura Y."/>
            <person name="Yuan S."/>
            <person name="Shinozaki K."/>
            <person name="Davis R.W."/>
            <person name="Theologis A."/>
            <person name="Ecker J.R."/>
        </authorList>
    </citation>
    <scope>NUCLEOTIDE SEQUENCE [LARGE SCALE MRNA]</scope>
    <source>
        <strain>cv. Columbia</strain>
    </source>
</reference>
<reference key="4">
    <citation type="journal article" date="2005" name="Plant Sci.">
        <title>Reduced expression of a protein homologous to glycogenin leads to reduction of starch content in Arabidopsis leaves.</title>
        <authorList>
            <person name="Chatterjee M."/>
            <person name="Berbezy P."/>
            <person name="Vyas D."/>
            <person name="Coates S."/>
            <person name="Barsby T."/>
        </authorList>
        <dbReference type="AGRICOLA" id="IND43669941"/>
    </citation>
    <scope>GENE FAMILY</scope>
</reference>
<reference key="5">
    <citation type="journal article" date="2010" name="Proc. Natl. Acad. Sci. U.S.A.">
        <title>Absence of branches from xylan in Arabidopsis gux mutants reveals potential for simplification of lignocellulosic biomass.</title>
        <authorList>
            <person name="Mortimer J.C."/>
            <person name="Miles G.P."/>
            <person name="Brown D.M."/>
            <person name="Zhang Z."/>
            <person name="Segura M.P."/>
            <person name="Weimar T."/>
            <person name="Yu X."/>
            <person name="Seffen K.A."/>
            <person name="Stephens E."/>
            <person name="Turner S.R."/>
            <person name="Dupree P."/>
        </authorList>
    </citation>
    <scope>SUBCELLULAR LOCATION</scope>
</reference>
<dbReference type="EC" id="2.4.1.-"/>
<dbReference type="EMBL" id="AC004260">
    <property type="protein sequence ID" value="AAC34345.1"/>
    <property type="status" value="ALT_SEQ"/>
    <property type="molecule type" value="Genomic_DNA"/>
</dbReference>
<dbReference type="EMBL" id="CP002684">
    <property type="protein sequence ID" value="AEE35939.1"/>
    <property type="molecule type" value="Genomic_DNA"/>
</dbReference>
<dbReference type="EMBL" id="AY062695">
    <property type="protein sequence ID" value="AAL32773.1"/>
    <property type="molecule type" value="mRNA"/>
</dbReference>
<dbReference type="EMBL" id="AY114677">
    <property type="protein sequence ID" value="AAM47996.1"/>
    <property type="molecule type" value="mRNA"/>
</dbReference>
<dbReference type="PIR" id="T00444">
    <property type="entry name" value="T00444"/>
</dbReference>
<dbReference type="RefSeq" id="NP_177838.2">
    <property type="nucleotide sequence ID" value="NM_106363.5"/>
</dbReference>
<dbReference type="SMR" id="Q8W4A7"/>
<dbReference type="BioGRID" id="29268">
    <property type="interactions" value="1"/>
</dbReference>
<dbReference type="FunCoup" id="Q8W4A7">
    <property type="interactions" value="256"/>
</dbReference>
<dbReference type="IntAct" id="Q8W4A7">
    <property type="interactions" value="1"/>
</dbReference>
<dbReference type="STRING" id="3702.Q8W4A7"/>
<dbReference type="CAZy" id="GT8">
    <property type="family name" value="Glycosyltransferase Family 8"/>
</dbReference>
<dbReference type="iPTMnet" id="Q8W4A7"/>
<dbReference type="PaxDb" id="3702-AT1G77130.1"/>
<dbReference type="ProteomicsDB" id="247155"/>
<dbReference type="EnsemblPlants" id="AT1G77130.1">
    <property type="protein sequence ID" value="AT1G77130.1"/>
    <property type="gene ID" value="AT1G77130"/>
</dbReference>
<dbReference type="GeneID" id="844049"/>
<dbReference type="Gramene" id="AT1G77130.1">
    <property type="protein sequence ID" value="AT1G77130.1"/>
    <property type="gene ID" value="AT1G77130"/>
</dbReference>
<dbReference type="KEGG" id="ath:AT1G77130"/>
<dbReference type="Araport" id="AT1G77130"/>
<dbReference type="TAIR" id="AT1G77130">
    <property type="gene designation" value="PGSIP2"/>
</dbReference>
<dbReference type="eggNOG" id="KOG1950">
    <property type="taxonomic scope" value="Eukaryota"/>
</dbReference>
<dbReference type="HOGENOM" id="CLU_023070_1_0_1"/>
<dbReference type="InParanoid" id="Q8W4A7"/>
<dbReference type="OMA" id="WTDNSTV"/>
<dbReference type="PhylomeDB" id="Q8W4A7"/>
<dbReference type="PRO" id="PR:Q8W4A7"/>
<dbReference type="Proteomes" id="UP000006548">
    <property type="component" value="Chromosome 1"/>
</dbReference>
<dbReference type="ExpressionAtlas" id="Q8W4A7">
    <property type="expression patterns" value="baseline and differential"/>
</dbReference>
<dbReference type="GO" id="GO:0005768">
    <property type="term" value="C:endosome"/>
    <property type="evidence" value="ECO:0007005"/>
    <property type="project" value="TAIR"/>
</dbReference>
<dbReference type="GO" id="GO:0005794">
    <property type="term" value="C:Golgi apparatus"/>
    <property type="evidence" value="ECO:0000314"/>
    <property type="project" value="UniProtKB"/>
</dbReference>
<dbReference type="GO" id="GO:0000139">
    <property type="term" value="C:Golgi membrane"/>
    <property type="evidence" value="ECO:0007669"/>
    <property type="project" value="UniProtKB-SubCell"/>
</dbReference>
<dbReference type="GO" id="GO:0000138">
    <property type="term" value="C:Golgi trans cisterna"/>
    <property type="evidence" value="ECO:0007005"/>
    <property type="project" value="TAIR"/>
</dbReference>
<dbReference type="GO" id="GO:0005802">
    <property type="term" value="C:trans-Golgi network"/>
    <property type="evidence" value="ECO:0007005"/>
    <property type="project" value="TAIR"/>
</dbReference>
<dbReference type="GO" id="GO:0015020">
    <property type="term" value="F:glucuronosyltransferase activity"/>
    <property type="evidence" value="ECO:0000314"/>
    <property type="project" value="TAIR"/>
</dbReference>
<dbReference type="GO" id="GO:0046872">
    <property type="term" value="F:metal ion binding"/>
    <property type="evidence" value="ECO:0007669"/>
    <property type="project" value="UniProtKB-KW"/>
</dbReference>
<dbReference type="GO" id="GO:0071555">
    <property type="term" value="P:cell wall organization"/>
    <property type="evidence" value="ECO:0007669"/>
    <property type="project" value="UniProtKB-KW"/>
</dbReference>
<dbReference type="GO" id="GO:0009834">
    <property type="term" value="P:plant-type secondary cell wall biogenesis"/>
    <property type="evidence" value="ECO:0000316"/>
    <property type="project" value="TAIR"/>
</dbReference>
<dbReference type="GO" id="GO:0045492">
    <property type="term" value="P:xylan biosynthetic process"/>
    <property type="evidence" value="ECO:0000314"/>
    <property type="project" value="TAIR"/>
</dbReference>
<dbReference type="CDD" id="cd02537">
    <property type="entry name" value="GT8_Glycogenin"/>
    <property type="match status" value="1"/>
</dbReference>
<dbReference type="FunFam" id="3.90.550.10:FF:000018">
    <property type="entry name" value="Hexosyltransferase"/>
    <property type="match status" value="1"/>
</dbReference>
<dbReference type="Gene3D" id="3.90.550.10">
    <property type="entry name" value="Spore Coat Polysaccharide Biosynthesis Protein SpsA, Chain A"/>
    <property type="match status" value="1"/>
</dbReference>
<dbReference type="InterPro" id="IPR002495">
    <property type="entry name" value="Glyco_trans_8"/>
</dbReference>
<dbReference type="InterPro" id="IPR050587">
    <property type="entry name" value="GNT1/Glycosyltrans_8"/>
</dbReference>
<dbReference type="InterPro" id="IPR029044">
    <property type="entry name" value="Nucleotide-diphossugar_trans"/>
</dbReference>
<dbReference type="PANTHER" id="PTHR11183">
    <property type="entry name" value="GLYCOGENIN SUBFAMILY MEMBER"/>
    <property type="match status" value="1"/>
</dbReference>
<dbReference type="Pfam" id="PF01501">
    <property type="entry name" value="Glyco_transf_8"/>
    <property type="match status" value="1"/>
</dbReference>
<dbReference type="SUPFAM" id="SSF53448">
    <property type="entry name" value="Nucleotide-diphospho-sugar transferases"/>
    <property type="match status" value="1"/>
</dbReference>
<keyword id="KW-0961">Cell wall biogenesis/degradation</keyword>
<keyword id="KW-0328">Glycosyltransferase</keyword>
<keyword id="KW-0333">Golgi apparatus</keyword>
<keyword id="KW-0464">Manganese</keyword>
<keyword id="KW-0472">Membrane</keyword>
<keyword id="KW-0479">Metal-binding</keyword>
<keyword id="KW-1185">Reference proteome</keyword>
<keyword id="KW-0735">Signal-anchor</keyword>
<keyword id="KW-0808">Transferase</keyword>
<keyword id="KW-0812">Transmembrane</keyword>
<keyword id="KW-1133">Transmembrane helix</keyword>
<gene>
    <name type="primary">GUX3</name>
    <name type="synonym">PGSIP2</name>
    <name type="ordered locus">At1g77130</name>
    <name type="ORF">T14N5.1</name>
</gene>
<feature type="chain" id="PRO_0000416735" description="Putative UDP-glucuronate:xylan alpha-glucuronosyltransferase 3">
    <location>
        <begin position="1"/>
        <end position="618"/>
    </location>
</feature>
<feature type="transmembrane region" description="Helical; Signal-anchor for type II membrane protein" evidence="4">
    <location>
        <begin position="32"/>
        <end position="54"/>
    </location>
</feature>
<feature type="region of interest" description="Disordered" evidence="5">
    <location>
        <begin position="598"/>
        <end position="618"/>
    </location>
</feature>
<feature type="compositionally biased region" description="Low complexity" evidence="5">
    <location>
        <begin position="598"/>
        <end position="608"/>
    </location>
</feature>
<feature type="binding site" evidence="3">
    <location>
        <begin position="379"/>
        <end position="381"/>
    </location>
    <ligand>
        <name>substrate</name>
    </ligand>
</feature>
<feature type="binding site" evidence="3">
    <location>
        <position position="379"/>
    </location>
    <ligand>
        <name>Mn(2+)</name>
        <dbReference type="ChEBI" id="CHEBI:29035"/>
    </ligand>
</feature>
<feature type="binding site" evidence="3">
    <location>
        <position position="381"/>
    </location>
    <ligand>
        <name>Mn(2+)</name>
        <dbReference type="ChEBI" id="CHEBI:29035"/>
    </ligand>
</feature>
<feature type="binding site" evidence="3">
    <location>
        <begin position="408"/>
        <end position="410"/>
    </location>
    <ligand>
        <name>substrate</name>
    </ligand>
</feature>
<feature type="binding site" evidence="3">
    <location>
        <begin position="435"/>
        <end position="439"/>
    </location>
    <ligand>
        <name>substrate</name>
    </ligand>
</feature>
<feature type="binding site" evidence="3">
    <location>
        <begin position="489"/>
        <end position="495"/>
    </location>
    <ligand>
        <name>substrate</name>
    </ligand>
</feature>
<feature type="binding site" evidence="3">
    <location>
        <position position="489"/>
    </location>
    <ligand>
        <name>Mn(2+)</name>
        <dbReference type="ChEBI" id="CHEBI:29035"/>
    </ligand>
</feature>
<feature type="site" description="Important for catalytic activity" evidence="2">
    <location>
        <position position="363"/>
    </location>
</feature>
<accession>Q8W4A7</accession>
<accession>O80649</accession>
<organism>
    <name type="scientific">Arabidopsis thaliana</name>
    <name type="common">Mouse-ear cress</name>
    <dbReference type="NCBI Taxonomy" id="3702"/>
    <lineage>
        <taxon>Eukaryota</taxon>
        <taxon>Viridiplantae</taxon>
        <taxon>Streptophyta</taxon>
        <taxon>Embryophyta</taxon>
        <taxon>Tracheophyta</taxon>
        <taxon>Spermatophyta</taxon>
        <taxon>Magnoliopsida</taxon>
        <taxon>eudicotyledons</taxon>
        <taxon>Gunneridae</taxon>
        <taxon>Pentapetalae</taxon>
        <taxon>rosids</taxon>
        <taxon>malvids</taxon>
        <taxon>Brassicales</taxon>
        <taxon>Brassicaceae</taxon>
        <taxon>Camelineae</taxon>
        <taxon>Arabidopsis</taxon>
    </lineage>
</organism>
<protein>
    <recommendedName>
        <fullName>Putative UDP-glucuronate:xylan alpha-glucuronosyltransferase 3</fullName>
        <shortName>UDP-GlcA:xylan glucuronyltransferase 3</shortName>
        <ecNumber>2.4.1.-</ecNumber>
    </recommendedName>
    <alternativeName>
        <fullName>Glycogenin-like protein 3</fullName>
    </alternativeName>
    <alternativeName>
        <fullName>Plant glycogenin-like starch initiation protein 2</fullName>
    </alternativeName>
    <alternativeName>
        <fullName>Protein GLUCURONIC ACID SUBSTITUTION OF XYLAN 3</fullName>
        <shortName>AtGUX3</shortName>
    </alternativeName>
</protein>
<proteinExistence type="evidence at transcript level"/>
<comment type="function">
    <text evidence="1">May be involved in the substitutions of the xylan backbone in stem glucuronoxylan.</text>
</comment>
<comment type="cofactor">
    <cofactor evidence="3">
        <name>Mn(2+)</name>
        <dbReference type="ChEBI" id="CHEBI:29035"/>
    </cofactor>
</comment>
<comment type="subcellular location">
    <subcellularLocation>
        <location evidence="7">Golgi apparatus membrane</location>
        <topology evidence="7">Single-pass type II membrane protein</topology>
    </subcellularLocation>
</comment>
<comment type="similarity">
    <text evidence="6">Belongs to the glycosyltransferase 8 family. Glycogenin subfamily.</text>
</comment>
<comment type="sequence caution" evidence="6">
    <conflict type="erroneous gene model prediction">
        <sequence resource="EMBL-CDS" id="AAC34345"/>
    </conflict>
</comment>
<evidence type="ECO:0000250" key="1"/>
<evidence type="ECO:0000250" key="2">
    <source>
        <dbReference type="UniProtKB" id="P13280"/>
    </source>
</evidence>
<evidence type="ECO:0000250" key="3">
    <source>
        <dbReference type="UniProtKB" id="P46976"/>
    </source>
</evidence>
<evidence type="ECO:0000255" key="4"/>
<evidence type="ECO:0000256" key="5">
    <source>
        <dbReference type="SAM" id="MobiDB-lite"/>
    </source>
</evidence>
<evidence type="ECO:0000305" key="6"/>
<evidence type="ECO:0000305" key="7">
    <source>
    </source>
</evidence>
<sequence>MIPSSSPMESRHRLSFSNEKTSRRRFQRIEKGVKFNTLKLVLICIMLGALFTIYRFRYPPLQIPEIPTSFGLTTDPRYVATAEINWNHMSNLVEKHVFGRSEYQGIGLINLNDNEIDRFKEVTKSDCDHVALHLDYAAKNITWESLYPEWIDEVEEFEVPTCPSLPLIQIPGKPRIDLVIAKLPCDKSGKWSRDVARLHLQLAAARVAASSKGLHNVHVILVSDCFPIPNLFTGQELVARQGNIWLYKPNLHQLRQKLQLPVGSCELSVPLQAKDNFYSAGAKKEAYATILHSAQFYVCGAIAAAQSIRMSGSTRDLVILVDETISEYHKSGLVAAGWKIQMFQRIRNPNAVPNAYNEWNYSKFRLWQLTEYSKIIFIDADMLILRNIDFLFEFPEISATGNNATLFNSGLMVVEPSNSTFQLLMDNINEVVSYNGGDQGYLNEIFTWWHRIPKHMNFLKHFWEGDEPEIKKMKTSLFGADPPILYVLHYLGYNKPWLCFRDYDCNWNVDIFQEFASDEAHKTWWRVHDAMPENLHKFCLLRSKQKAQLEWDRRQAEKGNYKDGHWKIKIKDKRLKTCFEDFCFWESMLWHWGETNSTNNSSTTTTSSPPHKTALPSL</sequence>
<name>GUX3_ARATH</name>